<organism>
    <name type="scientific">Mus musculus</name>
    <name type="common">Mouse</name>
    <dbReference type="NCBI Taxonomy" id="10090"/>
    <lineage>
        <taxon>Eukaryota</taxon>
        <taxon>Metazoa</taxon>
        <taxon>Chordata</taxon>
        <taxon>Craniata</taxon>
        <taxon>Vertebrata</taxon>
        <taxon>Euteleostomi</taxon>
        <taxon>Mammalia</taxon>
        <taxon>Eutheria</taxon>
        <taxon>Euarchontoglires</taxon>
        <taxon>Glires</taxon>
        <taxon>Rodentia</taxon>
        <taxon>Myomorpha</taxon>
        <taxon>Muroidea</taxon>
        <taxon>Muridae</taxon>
        <taxon>Murinae</taxon>
        <taxon>Mus</taxon>
        <taxon>Mus</taxon>
    </lineage>
</organism>
<keyword id="KW-0007">Acetylation</keyword>
<keyword id="KW-0009">Actin-binding</keyword>
<keyword id="KW-0025">Alternative splicing</keyword>
<keyword id="KW-0966">Cell projection</keyword>
<keyword id="KW-0175">Coiled coil</keyword>
<keyword id="KW-0963">Cytoplasm</keyword>
<keyword id="KW-0254">Endocytosis</keyword>
<keyword id="KW-0967">Endosome</keyword>
<keyword id="KW-0597">Phosphoprotein</keyword>
<keyword id="KW-1185">Reference proteome</keyword>
<keyword id="KW-0813">Transport</keyword>
<evidence type="ECO:0000250" key="1"/>
<evidence type="ECO:0000250" key="2">
    <source>
        <dbReference type="UniProtKB" id="Q5T1M5"/>
    </source>
</evidence>
<evidence type="ECO:0000255" key="3"/>
<evidence type="ECO:0000255" key="4">
    <source>
        <dbReference type="PROSITE-ProRule" id="PRU00277"/>
    </source>
</evidence>
<evidence type="ECO:0000256" key="5">
    <source>
        <dbReference type="SAM" id="MobiDB-lite"/>
    </source>
</evidence>
<evidence type="ECO:0000269" key="6">
    <source>
    </source>
</evidence>
<evidence type="ECO:0000269" key="7">
    <source>
    </source>
</evidence>
<evidence type="ECO:0000303" key="8">
    <source>
    </source>
</evidence>
<evidence type="ECO:0000305" key="9"/>
<evidence type="ECO:0007744" key="10">
    <source>
    </source>
</evidence>
<evidence type="ECO:0007744" key="11">
    <source>
    </source>
</evidence>
<evidence type="ECO:0007744" key="12">
    <source>
    </source>
</evidence>
<accession>Q6P9Q6</accession>
<accession>Q3TSY4</accession>
<accession>Q5SQG3</accession>
<accession>Q80TU5</accession>
<protein>
    <recommendedName>
        <fullName>FK506-binding protein 15</fullName>
        <shortName>FKBP-15</shortName>
    </recommendedName>
    <alternativeName>
        <fullName>133 kDa FK506-binding protein</fullName>
        <shortName>133 kDa FKBP</shortName>
        <shortName>FKBP-133</shortName>
    </alternativeName>
    <alternativeName>
        <fullName>WASP and FKBP-like</fullName>
        <shortName>WAFL</shortName>
    </alternativeName>
</protein>
<gene>
    <name type="primary">Fkbp15</name>
    <name type="synonym">Fkbp133</name>
    <name type="synonym">Kiaa0674</name>
</gene>
<reference key="1">
    <citation type="journal article" date="2009" name="PLoS Biol.">
        <title>Lineage-specific biology revealed by a finished genome assembly of the mouse.</title>
        <authorList>
            <person name="Church D.M."/>
            <person name="Goodstadt L."/>
            <person name="Hillier L.W."/>
            <person name="Zody M.C."/>
            <person name="Goldstein S."/>
            <person name="She X."/>
            <person name="Bult C.J."/>
            <person name="Agarwala R."/>
            <person name="Cherry J.L."/>
            <person name="DiCuccio M."/>
            <person name="Hlavina W."/>
            <person name="Kapustin Y."/>
            <person name="Meric P."/>
            <person name="Maglott D."/>
            <person name="Birtle Z."/>
            <person name="Marques A.C."/>
            <person name="Graves T."/>
            <person name="Zhou S."/>
            <person name="Teague B."/>
            <person name="Potamousis K."/>
            <person name="Churas C."/>
            <person name="Place M."/>
            <person name="Herschleb J."/>
            <person name="Runnheim R."/>
            <person name="Forrest D."/>
            <person name="Amos-Landgraf J."/>
            <person name="Schwartz D.C."/>
            <person name="Cheng Z."/>
            <person name="Lindblad-Toh K."/>
            <person name="Eichler E.E."/>
            <person name="Ponting C.P."/>
        </authorList>
    </citation>
    <scope>NUCLEOTIDE SEQUENCE [LARGE SCALE GENOMIC DNA]</scope>
    <source>
        <strain>C57BL/6J</strain>
    </source>
</reference>
<reference key="2">
    <citation type="journal article" date="2004" name="Genome Res.">
        <title>The status, quality, and expansion of the NIH full-length cDNA project: the Mammalian Gene Collection (MGC).</title>
        <authorList>
            <consortium name="The MGC Project Team"/>
        </authorList>
    </citation>
    <scope>NUCLEOTIDE SEQUENCE [LARGE SCALE MRNA] (ISOFORM A)</scope>
    <source>
        <strain>C57BL/6J</strain>
        <tissue>Brain</tissue>
    </source>
</reference>
<reference key="3">
    <citation type="journal article" date="2005" name="Science">
        <title>The transcriptional landscape of the mammalian genome.</title>
        <authorList>
            <person name="Carninci P."/>
            <person name="Kasukawa T."/>
            <person name="Katayama S."/>
            <person name="Gough J."/>
            <person name="Frith M.C."/>
            <person name="Maeda N."/>
            <person name="Oyama R."/>
            <person name="Ravasi T."/>
            <person name="Lenhard B."/>
            <person name="Wells C."/>
            <person name="Kodzius R."/>
            <person name="Shimokawa K."/>
            <person name="Bajic V.B."/>
            <person name="Brenner S.E."/>
            <person name="Batalov S."/>
            <person name="Forrest A.R."/>
            <person name="Zavolan M."/>
            <person name="Davis M.J."/>
            <person name="Wilming L.G."/>
            <person name="Aidinis V."/>
            <person name="Allen J.E."/>
            <person name="Ambesi-Impiombato A."/>
            <person name="Apweiler R."/>
            <person name="Aturaliya R.N."/>
            <person name="Bailey T.L."/>
            <person name="Bansal M."/>
            <person name="Baxter L."/>
            <person name="Beisel K.W."/>
            <person name="Bersano T."/>
            <person name="Bono H."/>
            <person name="Chalk A.M."/>
            <person name="Chiu K.P."/>
            <person name="Choudhary V."/>
            <person name="Christoffels A."/>
            <person name="Clutterbuck D.R."/>
            <person name="Crowe M.L."/>
            <person name="Dalla E."/>
            <person name="Dalrymple B.P."/>
            <person name="de Bono B."/>
            <person name="Della Gatta G."/>
            <person name="di Bernardo D."/>
            <person name="Down T."/>
            <person name="Engstrom P."/>
            <person name="Fagiolini M."/>
            <person name="Faulkner G."/>
            <person name="Fletcher C.F."/>
            <person name="Fukushima T."/>
            <person name="Furuno M."/>
            <person name="Futaki S."/>
            <person name="Gariboldi M."/>
            <person name="Georgii-Hemming P."/>
            <person name="Gingeras T.R."/>
            <person name="Gojobori T."/>
            <person name="Green R.E."/>
            <person name="Gustincich S."/>
            <person name="Harbers M."/>
            <person name="Hayashi Y."/>
            <person name="Hensch T.K."/>
            <person name="Hirokawa N."/>
            <person name="Hill D."/>
            <person name="Huminiecki L."/>
            <person name="Iacono M."/>
            <person name="Ikeo K."/>
            <person name="Iwama A."/>
            <person name="Ishikawa T."/>
            <person name="Jakt M."/>
            <person name="Kanapin A."/>
            <person name="Katoh M."/>
            <person name="Kawasawa Y."/>
            <person name="Kelso J."/>
            <person name="Kitamura H."/>
            <person name="Kitano H."/>
            <person name="Kollias G."/>
            <person name="Krishnan S.P."/>
            <person name="Kruger A."/>
            <person name="Kummerfeld S.K."/>
            <person name="Kurochkin I.V."/>
            <person name="Lareau L.F."/>
            <person name="Lazarevic D."/>
            <person name="Lipovich L."/>
            <person name="Liu J."/>
            <person name="Liuni S."/>
            <person name="McWilliam S."/>
            <person name="Madan Babu M."/>
            <person name="Madera M."/>
            <person name="Marchionni L."/>
            <person name="Matsuda H."/>
            <person name="Matsuzawa S."/>
            <person name="Miki H."/>
            <person name="Mignone F."/>
            <person name="Miyake S."/>
            <person name="Morris K."/>
            <person name="Mottagui-Tabar S."/>
            <person name="Mulder N."/>
            <person name="Nakano N."/>
            <person name="Nakauchi H."/>
            <person name="Ng P."/>
            <person name="Nilsson R."/>
            <person name="Nishiguchi S."/>
            <person name="Nishikawa S."/>
            <person name="Nori F."/>
            <person name="Ohara O."/>
            <person name="Okazaki Y."/>
            <person name="Orlando V."/>
            <person name="Pang K.C."/>
            <person name="Pavan W.J."/>
            <person name="Pavesi G."/>
            <person name="Pesole G."/>
            <person name="Petrovsky N."/>
            <person name="Piazza S."/>
            <person name="Reed J."/>
            <person name="Reid J.F."/>
            <person name="Ring B.Z."/>
            <person name="Ringwald M."/>
            <person name="Rost B."/>
            <person name="Ruan Y."/>
            <person name="Salzberg S.L."/>
            <person name="Sandelin A."/>
            <person name="Schneider C."/>
            <person name="Schoenbach C."/>
            <person name="Sekiguchi K."/>
            <person name="Semple C.A."/>
            <person name="Seno S."/>
            <person name="Sessa L."/>
            <person name="Sheng Y."/>
            <person name="Shibata Y."/>
            <person name="Shimada H."/>
            <person name="Shimada K."/>
            <person name="Silva D."/>
            <person name="Sinclair B."/>
            <person name="Sperling S."/>
            <person name="Stupka E."/>
            <person name="Sugiura K."/>
            <person name="Sultana R."/>
            <person name="Takenaka Y."/>
            <person name="Taki K."/>
            <person name="Tammoja K."/>
            <person name="Tan S.L."/>
            <person name="Tang S."/>
            <person name="Taylor M.S."/>
            <person name="Tegner J."/>
            <person name="Teichmann S.A."/>
            <person name="Ueda H.R."/>
            <person name="van Nimwegen E."/>
            <person name="Verardo R."/>
            <person name="Wei C.L."/>
            <person name="Yagi K."/>
            <person name="Yamanishi H."/>
            <person name="Zabarovsky E."/>
            <person name="Zhu S."/>
            <person name="Zimmer A."/>
            <person name="Hide W."/>
            <person name="Bult C."/>
            <person name="Grimmond S.M."/>
            <person name="Teasdale R.D."/>
            <person name="Liu E.T."/>
            <person name="Brusic V."/>
            <person name="Quackenbush J."/>
            <person name="Wahlestedt C."/>
            <person name="Mattick J.S."/>
            <person name="Hume D.A."/>
            <person name="Kai C."/>
            <person name="Sasaki D."/>
            <person name="Tomaru Y."/>
            <person name="Fukuda S."/>
            <person name="Kanamori-Katayama M."/>
            <person name="Suzuki M."/>
            <person name="Aoki J."/>
            <person name="Arakawa T."/>
            <person name="Iida J."/>
            <person name="Imamura K."/>
            <person name="Itoh M."/>
            <person name="Kato T."/>
            <person name="Kawaji H."/>
            <person name="Kawagashira N."/>
            <person name="Kawashima T."/>
            <person name="Kojima M."/>
            <person name="Kondo S."/>
            <person name="Konno H."/>
            <person name="Nakano K."/>
            <person name="Ninomiya N."/>
            <person name="Nishio T."/>
            <person name="Okada M."/>
            <person name="Plessy C."/>
            <person name="Shibata K."/>
            <person name="Shiraki T."/>
            <person name="Suzuki S."/>
            <person name="Tagami M."/>
            <person name="Waki K."/>
            <person name="Watahiki A."/>
            <person name="Okamura-Oho Y."/>
            <person name="Suzuki H."/>
            <person name="Kawai J."/>
            <person name="Hayashizaki Y."/>
        </authorList>
    </citation>
    <scope>NUCLEOTIDE SEQUENCE [LARGE SCALE MRNA] OF 1-704</scope>
    <source>
        <strain>C57BL/6J</strain>
        <tissue>Embryo</tissue>
    </source>
</reference>
<reference key="4">
    <citation type="journal article" date="2003" name="DNA Res.">
        <title>Prediction of the coding sequences of mouse homologues of KIAA gene: II. The complete nucleotide sequences of 400 mouse KIAA-homologous cDNAs identified by screening of terminal sequences of cDNA clones randomly sampled from size-fractionated libraries.</title>
        <authorList>
            <person name="Okazaki N."/>
            <person name="Kikuno R."/>
            <person name="Ohara R."/>
            <person name="Inamoto S."/>
            <person name="Aizawa H."/>
            <person name="Yuasa S."/>
            <person name="Nakajima D."/>
            <person name="Nagase T."/>
            <person name="Ohara O."/>
            <person name="Koga H."/>
        </authorList>
    </citation>
    <scope>NUCLEOTIDE SEQUENCE [LARGE SCALE MRNA] OF 213-1216 (ISOFORM B)</scope>
    <source>
        <tissue>Brain</tissue>
    </source>
</reference>
<reference key="5">
    <citation type="journal article" date="2006" name="Biochem. Biophys. Res. Commun.">
        <title>FKBP133: a novel mouse FK506-binding protein homolog alters growth cone morphology.</title>
        <authorList>
            <person name="Nakajima O."/>
            <person name="Nakamura F."/>
            <person name="Yamashita N."/>
            <person name="Tomita Y."/>
            <person name="Suto F."/>
            <person name="Okada T."/>
            <person name="Iwamatsu A."/>
            <person name="Kondo E."/>
            <person name="Fujisawa H."/>
            <person name="Takei K."/>
            <person name="Goshima Y."/>
        </authorList>
    </citation>
    <scope>IDENTIFICATION</scope>
    <scope>ALTERNATIVE SPLICING (ISOFORMS A AND B)</scope>
    <scope>FUNCTION</scope>
    <scope>DEVELOPMENTAL STAGE</scope>
    <scope>TISSUE SPECIFICITY</scope>
    <scope>SUBCELLULAR LOCATION</scope>
</reference>
<reference key="6">
    <citation type="journal article" date="2007" name="Proc. Natl. Acad. Sci. U.S.A.">
        <title>Large-scale phosphorylation analysis of mouse liver.</title>
        <authorList>
            <person name="Villen J."/>
            <person name="Beausoleil S.A."/>
            <person name="Gerber S.A."/>
            <person name="Gygi S.P."/>
        </authorList>
    </citation>
    <scope>PHOSPHORYLATION [LARGE SCALE ANALYSIS] AT SER-1091; THR-1093 AND SER-1159</scope>
    <scope>IDENTIFICATION BY MASS SPECTROMETRY [LARGE SCALE ANALYSIS]</scope>
    <source>
        <tissue>Liver</tissue>
    </source>
</reference>
<reference key="7">
    <citation type="journal article" date="2009" name="Immunity">
        <title>The phagosomal proteome in interferon-gamma-activated macrophages.</title>
        <authorList>
            <person name="Trost M."/>
            <person name="English L."/>
            <person name="Lemieux S."/>
            <person name="Courcelles M."/>
            <person name="Desjardins M."/>
            <person name="Thibault P."/>
        </authorList>
    </citation>
    <scope>PHOSPHORYLATION [LARGE SCALE ANALYSIS] AT SER-344 AND SER-1159</scope>
    <scope>IDENTIFICATION BY MASS SPECTROMETRY [LARGE SCALE ANALYSIS]</scope>
</reference>
<reference key="8">
    <citation type="journal article" date="2009" name="Mol. Cell. Proteomics">
        <title>Large scale localization of protein phosphorylation by use of electron capture dissociation mass spectrometry.</title>
        <authorList>
            <person name="Sweet S.M."/>
            <person name="Bailey C.M."/>
            <person name="Cunningham D.L."/>
            <person name="Heath J.K."/>
            <person name="Cooper H.J."/>
        </authorList>
    </citation>
    <scope>IDENTIFICATION BY MASS SPECTROMETRY [LARGE SCALE ANALYSIS]</scope>
    <source>
        <tissue>Embryonic fibroblast</tissue>
    </source>
</reference>
<reference key="9">
    <citation type="journal article" date="2010" name="Cell">
        <title>A tissue-specific atlas of mouse protein phosphorylation and expression.</title>
        <authorList>
            <person name="Huttlin E.L."/>
            <person name="Jedrychowski M.P."/>
            <person name="Elias J.E."/>
            <person name="Goswami T."/>
            <person name="Rad R."/>
            <person name="Beausoleil S.A."/>
            <person name="Villen J."/>
            <person name="Haas W."/>
            <person name="Sowa M.E."/>
            <person name="Gygi S.P."/>
        </authorList>
    </citation>
    <scope>PHOSPHORYLATION [LARGE SCALE ANALYSIS] AT SER-306; SER-310; SER-617; SER-1050; SER-1091; THR-1093; SER-1157; SER-1159 AND SER-1190</scope>
    <scope>IDENTIFICATION BY MASS SPECTROMETRY [LARGE SCALE ANALYSIS]</scope>
    <source>
        <tissue>Brain</tissue>
        <tissue>Brown adipose tissue</tissue>
        <tissue>Heart</tissue>
        <tissue>Kidney</tissue>
        <tissue>Liver</tissue>
        <tissue>Lung</tissue>
        <tissue>Pancreas</tissue>
        <tissue>Spleen</tissue>
        <tissue>Testis</tissue>
    </source>
</reference>
<reference key="10">
    <citation type="journal article" date="2017" name="Nat. Cell Biol.">
        <title>TBC1D23 is a bridging factor for endosomal vesicle capture by golgins at the trans-Golgi.</title>
        <authorList>
            <person name="Shin J.J.H."/>
            <person name="Gillingham A.K."/>
            <person name="Begum F."/>
            <person name="Chadwick J."/>
            <person name="Munro S."/>
        </authorList>
    </citation>
    <scope>INTERACTION WITH TBC1D23</scope>
</reference>
<dbReference type="EMBL" id="AL683829">
    <property type="status" value="NOT_ANNOTATED_CDS"/>
    <property type="molecule type" value="Genomic_DNA"/>
</dbReference>
<dbReference type="EMBL" id="AL732548">
    <property type="status" value="NOT_ANNOTATED_CDS"/>
    <property type="molecule type" value="Genomic_DNA"/>
</dbReference>
<dbReference type="EMBL" id="BC060651">
    <property type="protein sequence ID" value="AAH60651.1"/>
    <property type="molecule type" value="mRNA"/>
</dbReference>
<dbReference type="EMBL" id="AK161705">
    <property type="protein sequence ID" value="BAE36541.1"/>
    <property type="molecule type" value="mRNA"/>
</dbReference>
<dbReference type="EMBL" id="AK122343">
    <property type="protein sequence ID" value="BAC65625.1"/>
    <property type="molecule type" value="mRNA"/>
</dbReference>
<dbReference type="CCDS" id="CCDS51201.1">
    <molecule id="Q6P9Q6-1"/>
</dbReference>
<dbReference type="RefSeq" id="NP_001038993.1">
    <molecule id="Q6P9Q6-1"/>
    <property type="nucleotide sequence ID" value="NM_001045528.3"/>
</dbReference>
<dbReference type="RefSeq" id="XP_006538097.1">
    <molecule id="Q6P9Q6-2"/>
    <property type="nucleotide sequence ID" value="XM_006538034.4"/>
</dbReference>
<dbReference type="SMR" id="Q6P9Q6"/>
<dbReference type="BioGRID" id="237211">
    <property type="interactions" value="13"/>
</dbReference>
<dbReference type="FunCoup" id="Q6P9Q6">
    <property type="interactions" value="1963"/>
</dbReference>
<dbReference type="IntAct" id="Q6P9Q6">
    <property type="interactions" value="2"/>
</dbReference>
<dbReference type="STRING" id="10090.ENSMUSP00000081575"/>
<dbReference type="GlyGen" id="Q6P9Q6">
    <property type="glycosylation" value="5 sites, 2 N-linked glycans (2 sites), 1 O-linked glycan (1 site)"/>
</dbReference>
<dbReference type="iPTMnet" id="Q6P9Q6"/>
<dbReference type="PhosphoSitePlus" id="Q6P9Q6"/>
<dbReference type="SwissPalm" id="Q6P9Q6"/>
<dbReference type="jPOST" id="Q6P9Q6"/>
<dbReference type="PaxDb" id="10090-ENSMUSP00000081575"/>
<dbReference type="PeptideAtlas" id="Q6P9Q6"/>
<dbReference type="ProteomicsDB" id="271893">
    <molecule id="Q6P9Q6-1"/>
</dbReference>
<dbReference type="ProteomicsDB" id="271894">
    <molecule id="Q6P9Q6-2"/>
</dbReference>
<dbReference type="Pumba" id="Q6P9Q6"/>
<dbReference type="Antibodypedia" id="1961">
    <property type="antibodies" value="104 antibodies from 23 providers"/>
</dbReference>
<dbReference type="Ensembl" id="ENSMUST00000084527.10">
    <molecule id="Q6P9Q6-1"/>
    <property type="protein sequence ID" value="ENSMUSP00000081575.4"/>
    <property type="gene ID" value="ENSMUSG00000066151.13"/>
</dbReference>
<dbReference type="GeneID" id="338355"/>
<dbReference type="KEGG" id="mmu:338355"/>
<dbReference type="UCSC" id="uc008teh.2">
    <molecule id="Q6P9Q6-1"/>
    <property type="organism name" value="mouse"/>
</dbReference>
<dbReference type="UCSC" id="uc008tei.1">
    <molecule id="Q6P9Q6-2"/>
    <property type="organism name" value="mouse"/>
</dbReference>
<dbReference type="AGR" id="MGI:2444782"/>
<dbReference type="CTD" id="23307"/>
<dbReference type="MGI" id="MGI:2444782">
    <property type="gene designation" value="Fkbp15"/>
</dbReference>
<dbReference type="VEuPathDB" id="HostDB:ENSMUSG00000066151"/>
<dbReference type="eggNOG" id="KOG0549">
    <property type="taxonomic scope" value="Eukaryota"/>
</dbReference>
<dbReference type="eggNOG" id="KOG4725">
    <property type="taxonomic scope" value="Eukaryota"/>
</dbReference>
<dbReference type="GeneTree" id="ENSGT00530000064286"/>
<dbReference type="HOGENOM" id="CLU_007194_1_0_1"/>
<dbReference type="InParanoid" id="Q6P9Q6"/>
<dbReference type="OMA" id="VALKAHY"/>
<dbReference type="OrthoDB" id="69939at9989"/>
<dbReference type="PhylomeDB" id="Q6P9Q6"/>
<dbReference type="TreeFam" id="TF328592"/>
<dbReference type="BioGRID-ORCS" id="338355">
    <property type="hits" value="4 hits in 79 CRISPR screens"/>
</dbReference>
<dbReference type="ChiTaRS" id="Fkbp15">
    <property type="organism name" value="mouse"/>
</dbReference>
<dbReference type="PRO" id="PR:Q6P9Q6"/>
<dbReference type="Proteomes" id="UP000000589">
    <property type="component" value="Chromosome 4"/>
</dbReference>
<dbReference type="RNAct" id="Q6P9Q6">
    <property type="molecule type" value="protein"/>
</dbReference>
<dbReference type="Bgee" id="ENSMUSG00000066151">
    <property type="expression patterns" value="Expressed in stroma of bone marrow and 262 other cell types or tissues"/>
</dbReference>
<dbReference type="ExpressionAtlas" id="Q6P9Q6">
    <property type="expression patterns" value="baseline and differential"/>
</dbReference>
<dbReference type="GO" id="GO:0015629">
    <property type="term" value="C:actin cytoskeleton"/>
    <property type="evidence" value="ECO:0000314"/>
    <property type="project" value="MGI"/>
</dbReference>
<dbReference type="GO" id="GO:0030424">
    <property type="term" value="C:axon"/>
    <property type="evidence" value="ECO:0000314"/>
    <property type="project" value="MGI"/>
</dbReference>
<dbReference type="GO" id="GO:0005769">
    <property type="term" value="C:early endosome"/>
    <property type="evidence" value="ECO:0007669"/>
    <property type="project" value="UniProtKB-SubCell"/>
</dbReference>
<dbReference type="GO" id="GO:0005768">
    <property type="term" value="C:endosome"/>
    <property type="evidence" value="ECO:0000314"/>
    <property type="project" value="MGI"/>
</dbReference>
<dbReference type="GO" id="GO:0030426">
    <property type="term" value="C:growth cone"/>
    <property type="evidence" value="ECO:0000314"/>
    <property type="project" value="MGI"/>
</dbReference>
<dbReference type="GO" id="GO:0016020">
    <property type="term" value="C:membrane"/>
    <property type="evidence" value="ECO:0007669"/>
    <property type="project" value="Ensembl"/>
</dbReference>
<dbReference type="GO" id="GO:0003779">
    <property type="term" value="F:actin binding"/>
    <property type="evidence" value="ECO:0007669"/>
    <property type="project" value="UniProtKB-KW"/>
</dbReference>
<dbReference type="GO" id="GO:0006897">
    <property type="term" value="P:endocytosis"/>
    <property type="evidence" value="ECO:0007669"/>
    <property type="project" value="UniProtKB-KW"/>
</dbReference>
<dbReference type="FunFam" id="3.10.50.40:FF:000020">
    <property type="entry name" value="Peptidylprolyl isomerase"/>
    <property type="match status" value="1"/>
</dbReference>
<dbReference type="Gene3D" id="3.10.50.40">
    <property type="match status" value="1"/>
</dbReference>
<dbReference type="InterPro" id="IPR056598">
    <property type="entry name" value="FKBP-15_dom"/>
</dbReference>
<dbReference type="InterPro" id="IPR046357">
    <property type="entry name" value="PPIase_dom_sf"/>
</dbReference>
<dbReference type="InterPro" id="IPR001179">
    <property type="entry name" value="PPIase_FKBP_dom"/>
</dbReference>
<dbReference type="PANTHER" id="PTHR44927">
    <property type="entry name" value="FK506-BINDING PROTEIN 15"/>
    <property type="match status" value="1"/>
</dbReference>
<dbReference type="PANTHER" id="PTHR44927:SF1">
    <property type="entry name" value="FK506-BINDING PROTEIN 15"/>
    <property type="match status" value="1"/>
</dbReference>
<dbReference type="Pfam" id="PF23649">
    <property type="entry name" value="FKBP15"/>
    <property type="match status" value="1"/>
</dbReference>
<dbReference type="Pfam" id="PF00254">
    <property type="entry name" value="FKBP_C"/>
    <property type="match status" value="1"/>
</dbReference>
<dbReference type="SUPFAM" id="SSF54534">
    <property type="entry name" value="FKBP-like"/>
    <property type="match status" value="1"/>
</dbReference>
<dbReference type="PROSITE" id="PS50059">
    <property type="entry name" value="FKBP_PPIASE"/>
    <property type="match status" value="1"/>
</dbReference>
<proteinExistence type="evidence at protein level"/>
<sequence length="1216" mass="132961">MFGAGDEDDTDFLSPSGGAKLASLFGLDQATMGHGNEFFQYTAPKQPKKGQGTAAGNQTAPKPAPATTGTSSVLFATAVHAYRYINGQYAKQGKFGAAVLGNHTSREYRILLYISQQQPVTVATIHLNFELMVRPNNYSTFYDDQRQNWSIMFESEKAAVSFNKQVCVAKCNSISSLDAVLCQDLVAAEGPAVETGDSLEVAYTGWLLQNHVLGQVFDSTANKDKPLRLKLGSGKVVKGLEDGLLGMKKGGKRLIITPSACAAGSEGVIGWTQPTDSILVFEVEVRRVKFARDSGSDGHSVSSRDSAAPSPIPASDSLSADPVVTPLPLPLKPGEPGLRSKSNSLSEQLTVNSNPDTVKAKLISRMAKMGQPMLPILPPQLDSNDSETEDATVLRGAGQSLVTPSIQPSLQPAHPVLPQMASQAPQPSGSGLQTPSAALMQAVSLDSHSAVSGNAQNFQPYAGVQAYAYPQTPSVTSQLQPVRPLYPAPLSQAPHFQGSGDMMSFLMTEARQHNTEIRMAVNKVADKMDHLMTKVEELQKHSSGNSMLLPSMSVTMETSMIMSNIQRIIQENERLKQELLEKSSRIEEQNDKISDLIERNQRYVEQSNLMMEKRNNSLQTATENTQARILHAEQEKAKVTEELAAATAQVSHLQLKMTAHQKKETELQLQLTDNLKETDLLRGHVTRLQADLSELREASEQTQTKFKSEKQSRRQLELKVTSLEEELTDLRAEKTSLEKNLSERKKKSAQERCQAEAEMDEIRKSHQEELDRLRQLLKKARVSTDQAAAEQLTLAQAELQSQWEAKCEQLLASARDEHLQQYREVCAQRDAHQQKLALLQDECLALQAQIAAFTEQKEHMQRLEKTKSQAPAGRAAADPSEKVKKIMNQVFQSLRGEFELEESYDGGTILRTIMHTIKMVTLQLLNHQEEEEEEEEEEEEEKKPLRPSLEQPGPATPGMPPAPPSGETQEAPEVLPEQVVGETTPLPLQALPTPENGAQTRKGEPAEAEVPSEIKDSSLPPQPAGIPAHRVLGPPTSIPPKPPGPVTMDSESEEMLAADQRTVQPNGLLGEEHVREVATDGLLQGNSRRLSLTPDPEKGEPPALDPESQGGEAQPPECKQAEDVSSSGPRETLLDTELASAAAGTSLRHNQDSQHCSLSGDEEDELFKGATLKVPRPTAQPEEEDEDEVSMKGRPPPTPLFGDDDDDDDDDIGWLG</sequence>
<comment type="function">
    <text evidence="1 6">Involved in the transport of early endosomes at the level of transition between microfilament-based and microtubule-based movement (By similarity). May be involved in the cytoskeletal organization of neuronal growth cones. Seems to be inactive as a PPIase.</text>
</comment>
<comment type="subunit">
    <text evidence="2 7">Interacts with WIP and actin (By similarity). Interacts with TBC1D23 (PubMed:29084197).</text>
</comment>
<comment type="subcellular location">
    <subcellularLocation>
        <location evidence="6">Cytoplasm</location>
    </subcellularLocation>
    <subcellularLocation>
        <location evidence="6">Cell projection</location>
        <location evidence="6">Axon</location>
    </subcellularLocation>
    <subcellularLocation>
        <location evidence="6">Early endosome</location>
    </subcellularLocation>
    <text evidence="6">Present in axons and neuronal growth cones.</text>
</comment>
<comment type="alternative products">
    <event type="alternative splicing"/>
    <isoform>
        <id>Q6P9Q6-1</id>
        <name>A</name>
        <sequence type="displayed"/>
    </isoform>
    <isoform>
        <id>Q6P9Q6-2</id>
        <name>B</name>
        <sequence type="described" ref="VSP_027759"/>
    </isoform>
</comment>
<comment type="tissue specificity">
    <text evidence="6">Expressed in brain, with highest levels in the granular cell layer of cerebellum and in the granule cell layer of dentate gyrus.</text>
</comment>
<comment type="developmental stage">
    <text evidence="6">Strongly expressed in the developing nervous system at 18.5 dpc. Present in brain, heart, lung, kidney and thymus at 18.5 dpc (at protein level).</text>
</comment>
<comment type="domain">
    <text>The PPIase FKBP-type domain seems to be inactive both for FK506-binding and enzymatic activity.</text>
</comment>
<comment type="domain">
    <text evidence="1">The central coiled-coil region is responsible for association with early endosomes.</text>
</comment>
<comment type="similarity">
    <text evidence="9">Belongs to the FKBP-type PPIase family.</text>
</comment>
<feature type="chain" id="PRO_0000299557" description="FK506-binding protein 15">
    <location>
        <begin position="1"/>
        <end position="1216"/>
    </location>
</feature>
<feature type="domain" description="PPIase FKBP-type" evidence="4">
    <location>
        <begin position="196"/>
        <end position="289"/>
    </location>
</feature>
<feature type="region of interest" description="Disordered" evidence="5">
    <location>
        <begin position="41"/>
        <end position="68"/>
    </location>
</feature>
<feature type="region of interest" description="Important for function in growth cone organization">
    <location>
        <begin position="71"/>
        <end position="168"/>
    </location>
</feature>
<feature type="region of interest" description="Disordered" evidence="5">
    <location>
        <begin position="292"/>
        <end position="357"/>
    </location>
</feature>
<feature type="region of interest" description="Disordered" evidence="5">
    <location>
        <begin position="927"/>
        <end position="1216"/>
    </location>
</feature>
<feature type="coiled-coil region" evidence="3">
    <location>
        <begin position="519"/>
        <end position="790"/>
    </location>
</feature>
<feature type="coiled-coil region" evidence="3">
    <location>
        <begin position="820"/>
        <end position="865"/>
    </location>
</feature>
<feature type="compositionally biased region" description="Low complexity" evidence="5">
    <location>
        <begin position="59"/>
        <end position="68"/>
    </location>
</feature>
<feature type="compositionally biased region" description="Low complexity" evidence="5">
    <location>
        <begin position="303"/>
        <end position="322"/>
    </location>
</feature>
<feature type="compositionally biased region" description="Polar residues" evidence="5">
    <location>
        <begin position="340"/>
        <end position="356"/>
    </location>
</feature>
<feature type="compositionally biased region" description="Acidic residues" evidence="5">
    <location>
        <begin position="929"/>
        <end position="940"/>
    </location>
</feature>
<feature type="compositionally biased region" description="Pro residues" evidence="5">
    <location>
        <begin position="954"/>
        <end position="964"/>
    </location>
</feature>
<feature type="compositionally biased region" description="Low complexity" evidence="5">
    <location>
        <begin position="983"/>
        <end position="994"/>
    </location>
</feature>
<feature type="compositionally biased region" description="Pro residues" evidence="5">
    <location>
        <begin position="1036"/>
        <end position="1045"/>
    </location>
</feature>
<feature type="compositionally biased region" description="Acidic residues" evidence="5">
    <location>
        <begin position="1202"/>
        <end position="1216"/>
    </location>
</feature>
<feature type="modified residue" description="N-acetylmethionine" evidence="2">
    <location>
        <position position="1"/>
    </location>
</feature>
<feature type="modified residue" description="Phosphoserine" evidence="2">
    <location>
        <position position="14"/>
    </location>
</feature>
<feature type="modified residue" description="Phosphoserine" evidence="2">
    <location>
        <position position="23"/>
    </location>
</feature>
<feature type="modified residue" description="N6-acetyllysine" evidence="2">
    <location>
        <position position="91"/>
    </location>
</feature>
<feature type="modified residue" description="Phosphoserine" evidence="12">
    <location>
        <position position="306"/>
    </location>
</feature>
<feature type="modified residue" description="Phosphoserine" evidence="12">
    <location>
        <position position="310"/>
    </location>
</feature>
<feature type="modified residue" description="Phosphoserine" evidence="2">
    <location>
        <position position="342"/>
    </location>
</feature>
<feature type="modified residue" description="Phosphoserine" evidence="11">
    <location>
        <position position="344"/>
    </location>
</feature>
<feature type="modified residue" description="Phosphoserine" evidence="12">
    <location>
        <position position="617"/>
    </location>
</feature>
<feature type="modified residue" description="Phosphoserine" evidence="2">
    <location>
        <position position="948"/>
    </location>
</feature>
<feature type="modified residue" description="Phosphoserine" evidence="2">
    <location>
        <position position="1018"/>
    </location>
</feature>
<feature type="modified residue" description="Phosphoserine" evidence="12">
    <location>
        <position position="1050"/>
    </location>
</feature>
<feature type="modified residue" description="Phosphoserine" evidence="10 12">
    <location>
        <position position="1091"/>
    </location>
</feature>
<feature type="modified residue" description="Phosphothreonine" evidence="10 12">
    <location>
        <position position="1093"/>
    </location>
</feature>
<feature type="modified residue" description="Phosphoserine" evidence="2">
    <location>
        <position position="1108"/>
    </location>
</feature>
<feature type="modified residue" description="Phosphoserine" evidence="2">
    <location>
        <position position="1153"/>
    </location>
</feature>
<feature type="modified residue" description="Phosphoserine" evidence="12">
    <location>
        <position position="1157"/>
    </location>
</feature>
<feature type="modified residue" description="Phosphoserine" evidence="10 11 12">
    <location>
        <position position="1159"/>
    </location>
</feature>
<feature type="modified residue" description="Phosphoserine" evidence="12">
    <location>
        <position position="1190"/>
    </location>
</feature>
<feature type="modified residue" description="Phosphothreonine" evidence="2">
    <location>
        <position position="1198"/>
    </location>
</feature>
<feature type="splice variant" id="VSP_027759" description="In isoform B." evidence="8">
    <original>SMKGRPPPTPLFGDDDDDDDDDIGWLG</original>
    <variation>VRRPQALLSPHTTTWGLFPAGSETRKGVCWWLVSWTLCTGPCGSKLGAQSGQLCKHDGDGQLPLYS</variation>
    <location>
        <begin position="1190"/>
        <end position="1216"/>
    </location>
</feature>
<feature type="sequence conflict" description="In Ref. 3; BAE36541." evidence="9" ref="3">
    <original>H</original>
    <variation>R</variation>
    <location>
        <position position="652"/>
    </location>
</feature>
<name>FKB15_MOUSE</name>